<name>RECR_STREM</name>
<feature type="chain" id="PRO_1000089772" description="Recombination protein RecR">
    <location>
        <begin position="1"/>
        <end position="198"/>
    </location>
</feature>
<feature type="domain" description="Toprim" evidence="1">
    <location>
        <begin position="80"/>
        <end position="175"/>
    </location>
</feature>
<feature type="zinc finger region" description="C4-type" evidence="1">
    <location>
        <begin position="57"/>
        <end position="72"/>
    </location>
</feature>
<dbReference type="EMBL" id="CP001129">
    <property type="protein sequence ID" value="ACG62008.1"/>
    <property type="molecule type" value="Genomic_DNA"/>
</dbReference>
<dbReference type="RefSeq" id="WP_012515284.1">
    <property type="nucleotide sequence ID" value="NC_011134.1"/>
</dbReference>
<dbReference type="SMR" id="B4U1Z1"/>
<dbReference type="KEGG" id="sez:Sez_0641"/>
<dbReference type="HOGENOM" id="CLU_060739_1_0_9"/>
<dbReference type="Proteomes" id="UP000001873">
    <property type="component" value="Chromosome"/>
</dbReference>
<dbReference type="GO" id="GO:0003677">
    <property type="term" value="F:DNA binding"/>
    <property type="evidence" value="ECO:0007669"/>
    <property type="project" value="UniProtKB-UniRule"/>
</dbReference>
<dbReference type="GO" id="GO:0008270">
    <property type="term" value="F:zinc ion binding"/>
    <property type="evidence" value="ECO:0007669"/>
    <property type="project" value="UniProtKB-KW"/>
</dbReference>
<dbReference type="GO" id="GO:0006310">
    <property type="term" value="P:DNA recombination"/>
    <property type="evidence" value="ECO:0007669"/>
    <property type="project" value="UniProtKB-UniRule"/>
</dbReference>
<dbReference type="GO" id="GO:0006281">
    <property type="term" value="P:DNA repair"/>
    <property type="evidence" value="ECO:0007669"/>
    <property type="project" value="UniProtKB-UniRule"/>
</dbReference>
<dbReference type="CDD" id="cd01025">
    <property type="entry name" value="TOPRIM_recR"/>
    <property type="match status" value="1"/>
</dbReference>
<dbReference type="Gene3D" id="3.30.60.80">
    <property type="match status" value="1"/>
</dbReference>
<dbReference type="Gene3D" id="3.40.1360.10">
    <property type="match status" value="1"/>
</dbReference>
<dbReference type="Gene3D" id="6.10.250.240">
    <property type="match status" value="1"/>
</dbReference>
<dbReference type="Gene3D" id="1.10.8.420">
    <property type="entry name" value="RecR Domain 1"/>
    <property type="match status" value="1"/>
</dbReference>
<dbReference type="HAMAP" id="MF_00017">
    <property type="entry name" value="RecR"/>
    <property type="match status" value="1"/>
</dbReference>
<dbReference type="InterPro" id="IPR000093">
    <property type="entry name" value="DNA_Rcmb_RecR"/>
</dbReference>
<dbReference type="InterPro" id="IPR023627">
    <property type="entry name" value="Rcmb_RecR"/>
</dbReference>
<dbReference type="InterPro" id="IPR015967">
    <property type="entry name" value="Rcmb_RecR_Znf"/>
</dbReference>
<dbReference type="InterPro" id="IPR006171">
    <property type="entry name" value="TOPRIM_dom"/>
</dbReference>
<dbReference type="InterPro" id="IPR034137">
    <property type="entry name" value="TOPRIM_RecR"/>
</dbReference>
<dbReference type="NCBIfam" id="TIGR00615">
    <property type="entry name" value="recR"/>
    <property type="match status" value="1"/>
</dbReference>
<dbReference type="PANTHER" id="PTHR30446">
    <property type="entry name" value="RECOMBINATION PROTEIN RECR"/>
    <property type="match status" value="1"/>
</dbReference>
<dbReference type="PANTHER" id="PTHR30446:SF0">
    <property type="entry name" value="RECOMBINATION PROTEIN RECR"/>
    <property type="match status" value="1"/>
</dbReference>
<dbReference type="Pfam" id="PF21175">
    <property type="entry name" value="RecR_C"/>
    <property type="match status" value="1"/>
</dbReference>
<dbReference type="Pfam" id="PF21176">
    <property type="entry name" value="RecR_HhH"/>
    <property type="match status" value="1"/>
</dbReference>
<dbReference type="Pfam" id="PF02132">
    <property type="entry name" value="RecR_ZnF"/>
    <property type="match status" value="1"/>
</dbReference>
<dbReference type="Pfam" id="PF13662">
    <property type="entry name" value="Toprim_4"/>
    <property type="match status" value="1"/>
</dbReference>
<dbReference type="SMART" id="SM00493">
    <property type="entry name" value="TOPRIM"/>
    <property type="match status" value="1"/>
</dbReference>
<dbReference type="SUPFAM" id="SSF111304">
    <property type="entry name" value="Recombination protein RecR"/>
    <property type="match status" value="1"/>
</dbReference>
<dbReference type="PROSITE" id="PS01300">
    <property type="entry name" value="RECR"/>
    <property type="match status" value="1"/>
</dbReference>
<dbReference type="PROSITE" id="PS50880">
    <property type="entry name" value="TOPRIM"/>
    <property type="match status" value="1"/>
</dbReference>
<protein>
    <recommendedName>
        <fullName evidence="1">Recombination protein RecR</fullName>
    </recommendedName>
</protein>
<reference key="1">
    <citation type="journal article" date="2008" name="PLoS ONE">
        <title>Genome sequence of a lancefield group C Streptococcus zooepidemicus strain causing epidemic nephritis: new information about an old disease.</title>
        <authorList>
            <person name="Beres S.B."/>
            <person name="Sesso R."/>
            <person name="Pinto S.W.L."/>
            <person name="Hoe N.P."/>
            <person name="Porcella S.F."/>
            <person name="Deleo F.R."/>
            <person name="Musser J.M."/>
        </authorList>
    </citation>
    <scope>NUCLEOTIDE SEQUENCE [LARGE SCALE GENOMIC DNA]</scope>
    <source>
        <strain>MGCS10565</strain>
    </source>
</reference>
<accession>B4U1Z1</accession>
<sequence>MLYPIPIAKLIESYSKLPGIGVKTATRLAFYTIGMSDEDVNDFAKNLLAAKRELTYCSICGNLTDDDPCHICTDSSRDKETILVVEASKDVSAMEKIQEYHGYYHVLHGLISPMNGVGPDDINLKSLITRLMAGEATEVIVATNATADGEATAMYISRILKPAGIKVTRLARGLAVGSDIEYADEVTLLRAIENRTEL</sequence>
<proteinExistence type="inferred from homology"/>
<evidence type="ECO:0000255" key="1">
    <source>
        <dbReference type="HAMAP-Rule" id="MF_00017"/>
    </source>
</evidence>
<comment type="function">
    <text evidence="1">May play a role in DNA repair. It seems to be involved in an RecBC-independent recombinational process of DNA repair. It may act with RecF and RecO.</text>
</comment>
<comment type="similarity">
    <text evidence="1">Belongs to the RecR family.</text>
</comment>
<keyword id="KW-0227">DNA damage</keyword>
<keyword id="KW-0233">DNA recombination</keyword>
<keyword id="KW-0234">DNA repair</keyword>
<keyword id="KW-0479">Metal-binding</keyword>
<keyword id="KW-0862">Zinc</keyword>
<keyword id="KW-0863">Zinc-finger</keyword>
<organism>
    <name type="scientific">Streptococcus equi subsp. zooepidemicus (strain MGCS10565)</name>
    <dbReference type="NCBI Taxonomy" id="552526"/>
    <lineage>
        <taxon>Bacteria</taxon>
        <taxon>Bacillati</taxon>
        <taxon>Bacillota</taxon>
        <taxon>Bacilli</taxon>
        <taxon>Lactobacillales</taxon>
        <taxon>Streptococcaceae</taxon>
        <taxon>Streptococcus</taxon>
    </lineage>
</organism>
<gene>
    <name evidence="1" type="primary">recR</name>
    <name type="ordered locus">Sez_0641</name>
</gene>